<protein>
    <recommendedName>
        <fullName>Glucose import ATP-binding protein TsgD13</fullName>
        <ecNumber evidence="6">7.5.2.-</ecNumber>
    </recommendedName>
</protein>
<evidence type="ECO:0000250" key="1"/>
<evidence type="ECO:0000255" key="2">
    <source>
        <dbReference type="PROSITE-ProRule" id="PRU00434"/>
    </source>
</evidence>
<evidence type="ECO:0000256" key="3">
    <source>
        <dbReference type="SAM" id="MobiDB-lite"/>
    </source>
</evidence>
<evidence type="ECO:0000269" key="4">
    <source>
    </source>
</evidence>
<evidence type="ECO:0000305" key="5"/>
<evidence type="ECO:0000305" key="6">
    <source>
    </source>
</evidence>
<dbReference type="EC" id="7.5.2.-" evidence="6"/>
<dbReference type="EMBL" id="CP001953">
    <property type="protein sequence ID" value="ADE01548.1"/>
    <property type="molecule type" value="Genomic_DNA"/>
</dbReference>
<dbReference type="EMBL" id="AJ238879">
    <property type="protein sequence ID" value="CAB42544.1"/>
    <property type="molecule type" value="Genomic_DNA"/>
</dbReference>
<dbReference type="SMR" id="D4GPW3"/>
<dbReference type="PaxDb" id="309800-C498_02085"/>
<dbReference type="EnsemblBacteria" id="ADE01548">
    <property type="protein sequence ID" value="ADE01548"/>
    <property type="gene ID" value="HVO_B0316"/>
</dbReference>
<dbReference type="KEGG" id="hvo:HVO_B0316"/>
<dbReference type="eggNOG" id="arCOG00186">
    <property type="taxonomic scope" value="Archaea"/>
</dbReference>
<dbReference type="HOGENOM" id="CLU_000604_92_0_2"/>
<dbReference type="Proteomes" id="UP000008243">
    <property type="component" value="Plasmid pHV3"/>
</dbReference>
<dbReference type="GO" id="GO:0005886">
    <property type="term" value="C:plasma membrane"/>
    <property type="evidence" value="ECO:0007669"/>
    <property type="project" value="UniProtKB-SubCell"/>
</dbReference>
<dbReference type="GO" id="GO:0005524">
    <property type="term" value="F:ATP binding"/>
    <property type="evidence" value="ECO:0007669"/>
    <property type="project" value="UniProtKB-KW"/>
</dbReference>
<dbReference type="GO" id="GO:0016887">
    <property type="term" value="F:ATP hydrolysis activity"/>
    <property type="evidence" value="ECO:0007669"/>
    <property type="project" value="InterPro"/>
</dbReference>
<dbReference type="CDD" id="cd03216">
    <property type="entry name" value="ABC_Carb_Monos_I"/>
    <property type="match status" value="1"/>
</dbReference>
<dbReference type="CDD" id="cd03215">
    <property type="entry name" value="ABC_Carb_Monos_II"/>
    <property type="match status" value="1"/>
</dbReference>
<dbReference type="Gene3D" id="3.40.50.300">
    <property type="entry name" value="P-loop containing nucleotide triphosphate hydrolases"/>
    <property type="match status" value="2"/>
</dbReference>
<dbReference type="InterPro" id="IPR003593">
    <property type="entry name" value="AAA+_ATPase"/>
</dbReference>
<dbReference type="InterPro" id="IPR050107">
    <property type="entry name" value="ABC_carbohydrate_import_ATPase"/>
</dbReference>
<dbReference type="InterPro" id="IPR003439">
    <property type="entry name" value="ABC_transporter-like_ATP-bd"/>
</dbReference>
<dbReference type="InterPro" id="IPR017871">
    <property type="entry name" value="ABC_transporter-like_CS"/>
</dbReference>
<dbReference type="InterPro" id="IPR027417">
    <property type="entry name" value="P-loop_NTPase"/>
</dbReference>
<dbReference type="PANTHER" id="PTHR43790">
    <property type="entry name" value="CARBOHYDRATE TRANSPORT ATP-BINDING PROTEIN MG119-RELATED"/>
    <property type="match status" value="1"/>
</dbReference>
<dbReference type="PANTHER" id="PTHR43790:SF9">
    <property type="entry name" value="GALACTOFURANOSE TRANSPORTER ATP-BINDING PROTEIN YTFR"/>
    <property type="match status" value="1"/>
</dbReference>
<dbReference type="Pfam" id="PF00005">
    <property type="entry name" value="ABC_tran"/>
    <property type="match status" value="2"/>
</dbReference>
<dbReference type="SMART" id="SM00382">
    <property type="entry name" value="AAA"/>
    <property type="match status" value="2"/>
</dbReference>
<dbReference type="SUPFAM" id="SSF52540">
    <property type="entry name" value="P-loop containing nucleoside triphosphate hydrolases"/>
    <property type="match status" value="2"/>
</dbReference>
<dbReference type="PROSITE" id="PS00211">
    <property type="entry name" value="ABC_TRANSPORTER_1"/>
    <property type="match status" value="1"/>
</dbReference>
<dbReference type="PROSITE" id="PS50893">
    <property type="entry name" value="ABC_TRANSPORTER_2"/>
    <property type="match status" value="2"/>
</dbReference>
<geneLocation type="plasmid">
    <name>pHV3</name>
</geneLocation>
<comment type="function">
    <text evidence="1 4 5">Part of an ABC transporter complex involved in glucose import (Probable). Responsible for energy coupling to the transport system (By similarity).</text>
</comment>
<comment type="catalytic activity">
    <reaction evidence="6">
        <text>D-glucose(out) + ATP + H2O = D-glucose(in) + ADP + phosphate + H(+)</text>
        <dbReference type="Rhea" id="RHEA:60184"/>
        <dbReference type="ChEBI" id="CHEBI:4167"/>
        <dbReference type="ChEBI" id="CHEBI:15377"/>
        <dbReference type="ChEBI" id="CHEBI:15378"/>
        <dbReference type="ChEBI" id="CHEBI:30616"/>
        <dbReference type="ChEBI" id="CHEBI:43474"/>
        <dbReference type="ChEBI" id="CHEBI:456216"/>
    </reaction>
    <physiologicalReaction direction="left-to-right" evidence="6">
        <dbReference type="Rhea" id="RHEA:60185"/>
    </physiologicalReaction>
</comment>
<comment type="subunit">
    <text evidence="5">The complex is composed of two ATP-binding proteins (TsgD13), two transmembrane proteins (TsgB13 and TsgC13) and a solute-binding protein (TsgA13).</text>
</comment>
<comment type="subcellular location">
    <subcellularLocation>
        <location evidence="1">Cell membrane</location>
        <topology evidence="1">Peripheral membrane protein</topology>
    </subcellularLocation>
</comment>
<comment type="disruption phenotype">
    <text evidence="4">Mutant with a disruption within tsgB13 or tsgD13 cannot use glucose for nitrate respirative growth. However, the mutant can grow aerobically using glucose as the sole energy source.</text>
</comment>
<comment type="similarity">
    <text evidence="5">Belongs to the ABC transporter superfamily.</text>
</comment>
<proteinExistence type="inferred from homology"/>
<gene>
    <name type="primary">tsgD13</name>
    <name type="ordered locus">HVO_B0316</name>
</gene>
<reference key="1">
    <citation type="journal article" date="2010" name="PLoS ONE">
        <title>The complete genome sequence of Haloferax volcanii DS2, a model archaeon.</title>
        <authorList>
            <person name="Hartman A.L."/>
            <person name="Norais C."/>
            <person name="Badger J.H."/>
            <person name="Delmas S."/>
            <person name="Haldenby S."/>
            <person name="Madupu R."/>
            <person name="Robinson J."/>
            <person name="Khouri H."/>
            <person name="Ren Q."/>
            <person name="Lowe T.M."/>
            <person name="Maupin-Furlow J."/>
            <person name="Pohlschroder M."/>
            <person name="Daniels C."/>
            <person name="Pfeiffer F."/>
            <person name="Allers T."/>
            <person name="Eisen J.A."/>
        </authorList>
    </citation>
    <scope>NUCLEOTIDE SEQUENCE [LARGE SCALE GENOMIC DNA]</scope>
    <source>
        <strain>ATCC 29605 / DSM 3757 / JCM 8879 / NBRC 14742 / NCIMB 2012 / VKM B-1768 / DS2</strain>
        <plasmid>pHV3</plasmid>
    </source>
</reference>
<reference key="2">
    <citation type="journal article" date="1999" name="Genetics">
        <title>Genetic identification of three ABC transporters as essential elements for nitrate respiration in Haloferax volcanii.</title>
        <authorList>
            <person name="Wanner C."/>
            <person name="Soppa J."/>
        </authorList>
    </citation>
    <scope>NUCLEOTIDE SEQUENCE [GENOMIC DNA] OF 238-550</scope>
    <scope>FUNCTION</scope>
    <scope>DISRUPTION PHENOTYPE</scope>
    <source>
        <strain>DS2 / WR 340</strain>
    </source>
</reference>
<sequence>MTREPFLRMENIVKAFPGVVANDHIDLTVERGEIHGLLGENGAGKSTLMKILYGLYSQDDGEISLSGTRLRLDSPQDAIDAGIGMVHQHFMLIPRLTVAENVVLGEREPATPFRPDADAGGWLPDAVRSNSLVQSLAGRFSLGLDVPERRIQELADRYGFDIDVSAKVWELGVGQQQRVEILKALYRDVDLLILDEPTAVLTPTEADLLFDSLERLTDEGVSIIFITHKLEEVEAVVDRVTVLRDGENVGTVSTSDVSRADLAEMMVGREVLFTVDRERVAPGEPVLRARNVSATDDRGIEALSNVDLTVRRGEVVGIAGVSGNGQKELAEVIAGLRTVSAGELTVDGRDLTNASPRTFIDNGVSFVPEDRNRYGSAGDLSVMHNAAMKDFREDRFGSGVTLDYGELRAHAEALVEAFDVRGVHDVTDATAGDLSGGNLQKLILAREISRDPDLLVANQPTRGVDVGAIESIREAILDQRTEGTGVVLLSEDLDEIIDLSDRILVVYEGEVVYETTPEDADRERIGLEMTGGGDATATAGAQVRGLGGSS</sequence>
<name>TSGDD_HALVD</name>
<keyword id="KW-0067">ATP-binding</keyword>
<keyword id="KW-1003">Cell membrane</keyword>
<keyword id="KW-0472">Membrane</keyword>
<keyword id="KW-0547">Nucleotide-binding</keyword>
<keyword id="KW-0614">Plasmid</keyword>
<keyword id="KW-1185">Reference proteome</keyword>
<keyword id="KW-0677">Repeat</keyword>
<keyword id="KW-0762">Sugar transport</keyword>
<keyword id="KW-1278">Translocase</keyword>
<keyword id="KW-0813">Transport</keyword>
<feature type="chain" id="PRO_0000420944" description="Glucose import ATP-binding protein TsgD13">
    <location>
        <begin position="1"/>
        <end position="550"/>
    </location>
</feature>
<feature type="domain" description="ABC transporter 1" evidence="2">
    <location>
        <begin position="7"/>
        <end position="270"/>
    </location>
</feature>
<feature type="domain" description="ABC transporter 2" evidence="2">
    <location>
        <begin position="287"/>
        <end position="533"/>
    </location>
</feature>
<feature type="region of interest" description="Disordered" evidence="3">
    <location>
        <begin position="529"/>
        <end position="550"/>
    </location>
</feature>
<feature type="binding site" evidence="2">
    <location>
        <begin position="39"/>
        <end position="46"/>
    </location>
    <ligand>
        <name>ATP</name>
        <dbReference type="ChEBI" id="CHEBI:30616"/>
    </ligand>
</feature>
<organism>
    <name type="scientific">Haloferax volcanii (strain ATCC 29605 / DSM 3757 / JCM 8879 / NBRC 14742 / NCIMB 2012 / VKM B-1768 / DS2)</name>
    <name type="common">Halobacterium volcanii</name>
    <dbReference type="NCBI Taxonomy" id="309800"/>
    <lineage>
        <taxon>Archaea</taxon>
        <taxon>Methanobacteriati</taxon>
        <taxon>Methanobacteriota</taxon>
        <taxon>Stenosarchaea group</taxon>
        <taxon>Halobacteria</taxon>
        <taxon>Halobacteriales</taxon>
        <taxon>Haloferacaceae</taxon>
        <taxon>Haloferax</taxon>
    </lineage>
</organism>
<accession>D4GPW3</accession>
<accession>Q9Y8J8</accession>